<organism>
    <name type="scientific">Staphylococcus aureus (strain MRSA252)</name>
    <dbReference type="NCBI Taxonomy" id="282458"/>
    <lineage>
        <taxon>Bacteria</taxon>
        <taxon>Bacillati</taxon>
        <taxon>Bacillota</taxon>
        <taxon>Bacilli</taxon>
        <taxon>Bacillales</taxon>
        <taxon>Staphylococcaceae</taxon>
        <taxon>Staphylococcus</taxon>
    </lineage>
</organism>
<sequence>MSRVGKKIIDIPSDVTVTFDGNHVTVKGPKGELSRTLNERMTFKQEENTIEVVRPSDSKEDRTNHGTTRALLNNMVQGVSQGYVKVLELVGVGYRAQMQGKDLILNVGYSHPVEIKAEENITFSVEKNTVVKVEGISKEQVGALASNIRSVRPPEPYKGKGIRYQGEYVRRKEGKTGK</sequence>
<gene>
    <name evidence="1" type="primary">rplF</name>
    <name type="ordered locus">SAR2320</name>
</gene>
<name>RL6_STAAR</name>
<feature type="chain" id="PRO_0000223987" description="Large ribosomal subunit protein uL6">
    <location>
        <begin position="1"/>
        <end position="178"/>
    </location>
</feature>
<reference key="1">
    <citation type="journal article" date="2004" name="Proc. Natl. Acad. Sci. U.S.A.">
        <title>Complete genomes of two clinical Staphylococcus aureus strains: evidence for the rapid evolution of virulence and drug resistance.</title>
        <authorList>
            <person name="Holden M.T.G."/>
            <person name="Feil E.J."/>
            <person name="Lindsay J.A."/>
            <person name="Peacock S.J."/>
            <person name="Day N.P.J."/>
            <person name="Enright M.C."/>
            <person name="Foster T.J."/>
            <person name="Moore C.E."/>
            <person name="Hurst L."/>
            <person name="Atkin R."/>
            <person name="Barron A."/>
            <person name="Bason N."/>
            <person name="Bentley S.D."/>
            <person name="Chillingworth C."/>
            <person name="Chillingworth T."/>
            <person name="Churcher C."/>
            <person name="Clark L."/>
            <person name="Corton C."/>
            <person name="Cronin A."/>
            <person name="Doggett J."/>
            <person name="Dowd L."/>
            <person name="Feltwell T."/>
            <person name="Hance Z."/>
            <person name="Harris B."/>
            <person name="Hauser H."/>
            <person name="Holroyd S."/>
            <person name="Jagels K."/>
            <person name="James K.D."/>
            <person name="Lennard N."/>
            <person name="Line A."/>
            <person name="Mayes R."/>
            <person name="Moule S."/>
            <person name="Mungall K."/>
            <person name="Ormond D."/>
            <person name="Quail M.A."/>
            <person name="Rabbinowitsch E."/>
            <person name="Rutherford K.M."/>
            <person name="Sanders M."/>
            <person name="Sharp S."/>
            <person name="Simmonds M."/>
            <person name="Stevens K."/>
            <person name="Whitehead S."/>
            <person name="Barrell B.G."/>
            <person name="Spratt B.G."/>
            <person name="Parkhill J."/>
        </authorList>
    </citation>
    <scope>NUCLEOTIDE SEQUENCE [LARGE SCALE GENOMIC DNA]</scope>
    <source>
        <strain>MRSA252</strain>
    </source>
</reference>
<dbReference type="EMBL" id="BX571856">
    <property type="protein sequence ID" value="CAG41301.1"/>
    <property type="molecule type" value="Genomic_DNA"/>
</dbReference>
<dbReference type="RefSeq" id="WP_000091975.1">
    <property type="nucleotide sequence ID" value="NC_002952.2"/>
</dbReference>
<dbReference type="SMR" id="Q6GEJ8"/>
<dbReference type="KEGG" id="sar:SAR2320"/>
<dbReference type="HOGENOM" id="CLU_065464_1_2_9"/>
<dbReference type="Proteomes" id="UP000000596">
    <property type="component" value="Chromosome"/>
</dbReference>
<dbReference type="GO" id="GO:0022625">
    <property type="term" value="C:cytosolic large ribosomal subunit"/>
    <property type="evidence" value="ECO:0007669"/>
    <property type="project" value="TreeGrafter"/>
</dbReference>
<dbReference type="GO" id="GO:0019843">
    <property type="term" value="F:rRNA binding"/>
    <property type="evidence" value="ECO:0007669"/>
    <property type="project" value="UniProtKB-UniRule"/>
</dbReference>
<dbReference type="GO" id="GO:0003735">
    <property type="term" value="F:structural constituent of ribosome"/>
    <property type="evidence" value="ECO:0007669"/>
    <property type="project" value="InterPro"/>
</dbReference>
<dbReference type="GO" id="GO:0002181">
    <property type="term" value="P:cytoplasmic translation"/>
    <property type="evidence" value="ECO:0007669"/>
    <property type="project" value="TreeGrafter"/>
</dbReference>
<dbReference type="FunFam" id="3.90.930.12:FF:000001">
    <property type="entry name" value="50S ribosomal protein L6"/>
    <property type="match status" value="1"/>
</dbReference>
<dbReference type="FunFam" id="3.90.930.12:FF:000002">
    <property type="entry name" value="50S ribosomal protein L6"/>
    <property type="match status" value="1"/>
</dbReference>
<dbReference type="Gene3D" id="3.90.930.12">
    <property type="entry name" value="Ribosomal protein L6, alpha-beta domain"/>
    <property type="match status" value="2"/>
</dbReference>
<dbReference type="HAMAP" id="MF_01365_B">
    <property type="entry name" value="Ribosomal_uL6_B"/>
    <property type="match status" value="1"/>
</dbReference>
<dbReference type="InterPro" id="IPR000702">
    <property type="entry name" value="Ribosomal_uL6-like"/>
</dbReference>
<dbReference type="InterPro" id="IPR036789">
    <property type="entry name" value="Ribosomal_uL6-like_a/b-dom_sf"/>
</dbReference>
<dbReference type="InterPro" id="IPR020040">
    <property type="entry name" value="Ribosomal_uL6_a/b-dom"/>
</dbReference>
<dbReference type="InterPro" id="IPR019906">
    <property type="entry name" value="Ribosomal_uL6_bac-type"/>
</dbReference>
<dbReference type="InterPro" id="IPR002358">
    <property type="entry name" value="Ribosomal_uL6_CS"/>
</dbReference>
<dbReference type="NCBIfam" id="TIGR03654">
    <property type="entry name" value="L6_bact"/>
    <property type="match status" value="1"/>
</dbReference>
<dbReference type="PANTHER" id="PTHR11655">
    <property type="entry name" value="60S/50S RIBOSOMAL PROTEIN L6/L9"/>
    <property type="match status" value="1"/>
</dbReference>
<dbReference type="PANTHER" id="PTHR11655:SF14">
    <property type="entry name" value="LARGE RIBOSOMAL SUBUNIT PROTEIN UL6M"/>
    <property type="match status" value="1"/>
</dbReference>
<dbReference type="Pfam" id="PF00347">
    <property type="entry name" value="Ribosomal_L6"/>
    <property type="match status" value="2"/>
</dbReference>
<dbReference type="PIRSF" id="PIRSF002162">
    <property type="entry name" value="Ribosomal_L6"/>
    <property type="match status" value="1"/>
</dbReference>
<dbReference type="PRINTS" id="PR00059">
    <property type="entry name" value="RIBOSOMALL6"/>
</dbReference>
<dbReference type="SUPFAM" id="SSF56053">
    <property type="entry name" value="Ribosomal protein L6"/>
    <property type="match status" value="2"/>
</dbReference>
<dbReference type="PROSITE" id="PS00525">
    <property type="entry name" value="RIBOSOMAL_L6_1"/>
    <property type="match status" value="1"/>
</dbReference>
<proteinExistence type="inferred from homology"/>
<protein>
    <recommendedName>
        <fullName evidence="1">Large ribosomal subunit protein uL6</fullName>
    </recommendedName>
    <alternativeName>
        <fullName evidence="2">50S ribosomal protein L6</fullName>
    </alternativeName>
</protein>
<comment type="function">
    <text evidence="1">This protein binds to the 23S rRNA, and is important in its secondary structure. It is located near the subunit interface in the base of the L7/L12 stalk, and near the tRNA binding site of the peptidyltransferase center.</text>
</comment>
<comment type="subunit">
    <text evidence="1">Part of the 50S ribosomal subunit.</text>
</comment>
<comment type="similarity">
    <text evidence="1">Belongs to the universal ribosomal protein uL6 family.</text>
</comment>
<evidence type="ECO:0000255" key="1">
    <source>
        <dbReference type="HAMAP-Rule" id="MF_01365"/>
    </source>
</evidence>
<evidence type="ECO:0000305" key="2"/>
<accession>Q6GEJ8</accession>
<keyword id="KW-0687">Ribonucleoprotein</keyword>
<keyword id="KW-0689">Ribosomal protein</keyword>
<keyword id="KW-0694">RNA-binding</keyword>
<keyword id="KW-0699">rRNA-binding</keyword>